<keyword id="KW-1003">Cell membrane</keyword>
<keyword id="KW-0342">GTP-binding</keyword>
<keyword id="KW-0378">Hydrolase</keyword>
<keyword id="KW-0472">Membrane</keyword>
<keyword id="KW-0547">Nucleotide-binding</keyword>
<keyword id="KW-0648">Protein biosynthesis</keyword>
<keyword id="KW-1185">Reference proteome</keyword>
<feature type="chain" id="PRO_0000176246" description="Elongation factor 4">
    <location>
        <begin position="1"/>
        <end position="610"/>
    </location>
</feature>
<feature type="domain" description="tr-type G">
    <location>
        <begin position="15"/>
        <end position="197"/>
    </location>
</feature>
<feature type="binding site" evidence="1">
    <location>
        <begin position="27"/>
        <end position="32"/>
    </location>
    <ligand>
        <name>GTP</name>
        <dbReference type="ChEBI" id="CHEBI:37565"/>
    </ligand>
</feature>
<feature type="binding site" evidence="1">
    <location>
        <begin position="144"/>
        <end position="147"/>
    </location>
    <ligand>
        <name>GTP</name>
        <dbReference type="ChEBI" id="CHEBI:37565"/>
    </ligand>
</feature>
<reference key="1">
    <citation type="journal article" date="2000" name="Nature">
        <title>Genome sequence of the endocellular bacterial symbiont of aphids Buchnera sp. APS.</title>
        <authorList>
            <person name="Shigenobu S."/>
            <person name="Watanabe H."/>
            <person name="Hattori M."/>
            <person name="Sakaki Y."/>
            <person name="Ishikawa H."/>
        </authorList>
    </citation>
    <scope>NUCLEOTIDE SEQUENCE [LARGE SCALE GENOMIC DNA]</scope>
    <source>
        <strain>APS</strain>
    </source>
</reference>
<gene>
    <name evidence="1" type="primary">lepA</name>
    <name type="ordered locus">BU260</name>
</gene>
<name>LEPA_BUCAI</name>
<organism>
    <name type="scientific">Buchnera aphidicola subsp. Acyrthosiphon pisum (strain APS)</name>
    <name type="common">Acyrthosiphon pisum symbiotic bacterium</name>
    <dbReference type="NCBI Taxonomy" id="107806"/>
    <lineage>
        <taxon>Bacteria</taxon>
        <taxon>Pseudomonadati</taxon>
        <taxon>Pseudomonadota</taxon>
        <taxon>Gammaproteobacteria</taxon>
        <taxon>Enterobacterales</taxon>
        <taxon>Erwiniaceae</taxon>
        <taxon>Buchnera</taxon>
    </lineage>
</organism>
<protein>
    <recommendedName>
        <fullName evidence="1">Elongation factor 4</fullName>
        <shortName evidence="1">EF-4</shortName>
        <ecNumber evidence="1">3.6.5.n1</ecNumber>
    </recommendedName>
    <alternativeName>
        <fullName evidence="1">Ribosomal back-translocase LepA</fullName>
    </alternativeName>
</protein>
<evidence type="ECO:0000255" key="1">
    <source>
        <dbReference type="HAMAP-Rule" id="MF_00071"/>
    </source>
</evidence>
<accession>P57348</accession>
<sequence>MLKCIKHEYGIKNMKSIRNFSIIAHIDHGKSTLSDRLIQLCGGLSEREMSNQVLDSMDLEKERGITIKAQSVMIDYKNKSGNIFNLNFIDTPGHVDFSYEVSRSLAACEGALLVVDSTQGVEAQTLANCYTAIDMNVEIVPVLNKIDLPNSNADKVAKEIEDIIGIPALDAIRCSAKTGEGIEDLIERIINDIPYPKGSINSPLQALIIDSWFDNYLGVVSLIRIKNGILFERDKIQVMSTGKNYYVDQIGVFTPKKLNKNQLRCGEVGWIICGIKNIIAAPVGDTLTTAKNPAKNMIIGFKKIKPQIYAGLFPLTSDQYEMFRDALGKLSLNDASLFYEPENSVALGFGFRCGFLGVLHMEIIQARLEREYSIDLITTIPTVIYEIELINGKIIYLDTPSNFPNMNDIKIIKEPIVECSILSPPQFLGSIIKLCIKKRGVQINMVYHSHQVLLKYNIPMNEVILNFFDELKSVSSGYASLEYDFKYFQSVKMVRIDILINSEKVDALTILSYHKNAQSRSREIVDKMKKLIPRHQFDISIQAVINNSVIARSTIKQLRKNVLSKCYGGDVSRKKKLLQKQKDGKKRMKKIGNVNVPKTVFLSILNSRES</sequence>
<proteinExistence type="inferred from homology"/>
<dbReference type="EC" id="3.6.5.n1" evidence="1"/>
<dbReference type="EMBL" id="BA000003">
    <property type="protein sequence ID" value="BAB12970.1"/>
    <property type="molecule type" value="Genomic_DNA"/>
</dbReference>
<dbReference type="RefSeq" id="NP_240084.1">
    <property type="nucleotide sequence ID" value="NC_002528.1"/>
</dbReference>
<dbReference type="SMR" id="P57348"/>
<dbReference type="STRING" id="563178.BUAP5A_255"/>
<dbReference type="EnsemblBacteria" id="BAB12970">
    <property type="protein sequence ID" value="BAB12970"/>
    <property type="gene ID" value="BAB12970"/>
</dbReference>
<dbReference type="KEGG" id="buc:BU260"/>
<dbReference type="PATRIC" id="fig|107806.10.peg.270"/>
<dbReference type="eggNOG" id="COG0481">
    <property type="taxonomic scope" value="Bacteria"/>
</dbReference>
<dbReference type="HOGENOM" id="CLU_009995_3_3_6"/>
<dbReference type="Proteomes" id="UP000001806">
    <property type="component" value="Chromosome"/>
</dbReference>
<dbReference type="GO" id="GO:0005886">
    <property type="term" value="C:plasma membrane"/>
    <property type="evidence" value="ECO:0007669"/>
    <property type="project" value="UniProtKB-SubCell"/>
</dbReference>
<dbReference type="GO" id="GO:0005525">
    <property type="term" value="F:GTP binding"/>
    <property type="evidence" value="ECO:0007669"/>
    <property type="project" value="UniProtKB-UniRule"/>
</dbReference>
<dbReference type="GO" id="GO:0003924">
    <property type="term" value="F:GTPase activity"/>
    <property type="evidence" value="ECO:0007669"/>
    <property type="project" value="UniProtKB-UniRule"/>
</dbReference>
<dbReference type="GO" id="GO:0097216">
    <property type="term" value="F:guanosine tetraphosphate binding"/>
    <property type="evidence" value="ECO:0007669"/>
    <property type="project" value="UniProtKB-ARBA"/>
</dbReference>
<dbReference type="GO" id="GO:0043022">
    <property type="term" value="F:ribosome binding"/>
    <property type="evidence" value="ECO:0007669"/>
    <property type="project" value="UniProtKB-UniRule"/>
</dbReference>
<dbReference type="GO" id="GO:0003746">
    <property type="term" value="F:translation elongation factor activity"/>
    <property type="evidence" value="ECO:0007669"/>
    <property type="project" value="UniProtKB-UniRule"/>
</dbReference>
<dbReference type="GO" id="GO:0045727">
    <property type="term" value="P:positive regulation of translation"/>
    <property type="evidence" value="ECO:0007669"/>
    <property type="project" value="UniProtKB-UniRule"/>
</dbReference>
<dbReference type="CDD" id="cd03699">
    <property type="entry name" value="EF4_II"/>
    <property type="match status" value="1"/>
</dbReference>
<dbReference type="CDD" id="cd16260">
    <property type="entry name" value="EF4_III"/>
    <property type="match status" value="1"/>
</dbReference>
<dbReference type="CDD" id="cd01890">
    <property type="entry name" value="LepA"/>
    <property type="match status" value="1"/>
</dbReference>
<dbReference type="CDD" id="cd03709">
    <property type="entry name" value="lepA_C"/>
    <property type="match status" value="1"/>
</dbReference>
<dbReference type="FunFam" id="3.40.50.300:FF:000078">
    <property type="entry name" value="Elongation factor 4"/>
    <property type="match status" value="1"/>
</dbReference>
<dbReference type="FunFam" id="2.40.30.10:FF:000015">
    <property type="entry name" value="Translation factor GUF1, mitochondrial"/>
    <property type="match status" value="1"/>
</dbReference>
<dbReference type="FunFam" id="3.30.70.240:FF:000007">
    <property type="entry name" value="Translation factor GUF1, mitochondrial"/>
    <property type="match status" value="1"/>
</dbReference>
<dbReference type="FunFam" id="3.30.70.2570:FF:000001">
    <property type="entry name" value="Translation factor GUF1, mitochondrial"/>
    <property type="match status" value="1"/>
</dbReference>
<dbReference type="FunFam" id="3.30.70.870:FF:000004">
    <property type="entry name" value="Translation factor GUF1, mitochondrial"/>
    <property type="match status" value="1"/>
</dbReference>
<dbReference type="Gene3D" id="3.30.70.240">
    <property type="match status" value="1"/>
</dbReference>
<dbReference type="Gene3D" id="3.30.70.2570">
    <property type="entry name" value="Elongation factor 4, C-terminal domain"/>
    <property type="match status" value="1"/>
</dbReference>
<dbReference type="Gene3D" id="3.30.70.870">
    <property type="entry name" value="Elongation Factor G (Translational Gtpase), domain 3"/>
    <property type="match status" value="1"/>
</dbReference>
<dbReference type="Gene3D" id="3.40.50.300">
    <property type="entry name" value="P-loop containing nucleotide triphosphate hydrolases"/>
    <property type="match status" value="1"/>
</dbReference>
<dbReference type="Gene3D" id="2.40.30.10">
    <property type="entry name" value="Translation factors"/>
    <property type="match status" value="1"/>
</dbReference>
<dbReference type="HAMAP" id="MF_00071">
    <property type="entry name" value="LepA"/>
    <property type="match status" value="1"/>
</dbReference>
<dbReference type="InterPro" id="IPR006297">
    <property type="entry name" value="EF-4"/>
</dbReference>
<dbReference type="InterPro" id="IPR035647">
    <property type="entry name" value="EFG_III/V"/>
</dbReference>
<dbReference type="InterPro" id="IPR000640">
    <property type="entry name" value="EFG_V-like"/>
</dbReference>
<dbReference type="InterPro" id="IPR004161">
    <property type="entry name" value="EFTu-like_2"/>
</dbReference>
<dbReference type="InterPro" id="IPR031157">
    <property type="entry name" value="G_TR_CS"/>
</dbReference>
<dbReference type="InterPro" id="IPR038363">
    <property type="entry name" value="LepA_C_sf"/>
</dbReference>
<dbReference type="InterPro" id="IPR013842">
    <property type="entry name" value="LepA_CTD"/>
</dbReference>
<dbReference type="InterPro" id="IPR035654">
    <property type="entry name" value="LepA_IV"/>
</dbReference>
<dbReference type="InterPro" id="IPR027417">
    <property type="entry name" value="P-loop_NTPase"/>
</dbReference>
<dbReference type="InterPro" id="IPR005225">
    <property type="entry name" value="Small_GTP-bd"/>
</dbReference>
<dbReference type="InterPro" id="IPR000795">
    <property type="entry name" value="T_Tr_GTP-bd_dom"/>
</dbReference>
<dbReference type="NCBIfam" id="TIGR01393">
    <property type="entry name" value="lepA"/>
    <property type="match status" value="1"/>
</dbReference>
<dbReference type="NCBIfam" id="TIGR00231">
    <property type="entry name" value="small_GTP"/>
    <property type="match status" value="1"/>
</dbReference>
<dbReference type="PANTHER" id="PTHR43512:SF4">
    <property type="entry name" value="TRANSLATION FACTOR GUF1 HOMOLOG, CHLOROPLASTIC"/>
    <property type="match status" value="1"/>
</dbReference>
<dbReference type="PANTHER" id="PTHR43512">
    <property type="entry name" value="TRANSLATION FACTOR GUF1-RELATED"/>
    <property type="match status" value="1"/>
</dbReference>
<dbReference type="Pfam" id="PF00679">
    <property type="entry name" value="EFG_C"/>
    <property type="match status" value="1"/>
</dbReference>
<dbReference type="Pfam" id="PF00009">
    <property type="entry name" value="GTP_EFTU"/>
    <property type="match status" value="1"/>
</dbReference>
<dbReference type="Pfam" id="PF03144">
    <property type="entry name" value="GTP_EFTU_D2"/>
    <property type="match status" value="1"/>
</dbReference>
<dbReference type="Pfam" id="PF06421">
    <property type="entry name" value="LepA_C"/>
    <property type="match status" value="1"/>
</dbReference>
<dbReference type="PRINTS" id="PR00315">
    <property type="entry name" value="ELONGATNFCT"/>
</dbReference>
<dbReference type="SUPFAM" id="SSF54980">
    <property type="entry name" value="EF-G C-terminal domain-like"/>
    <property type="match status" value="2"/>
</dbReference>
<dbReference type="SUPFAM" id="SSF52540">
    <property type="entry name" value="P-loop containing nucleoside triphosphate hydrolases"/>
    <property type="match status" value="1"/>
</dbReference>
<dbReference type="PROSITE" id="PS00301">
    <property type="entry name" value="G_TR_1"/>
    <property type="match status" value="1"/>
</dbReference>
<dbReference type="PROSITE" id="PS51722">
    <property type="entry name" value="G_TR_2"/>
    <property type="match status" value="1"/>
</dbReference>
<comment type="function">
    <text evidence="1">Required for accurate and efficient protein synthesis under certain stress conditions. May act as a fidelity factor of the translation reaction, by catalyzing a one-codon backward translocation of tRNAs on improperly translocated ribosomes. Back-translocation proceeds from a post-translocation (POST) complex to a pre-translocation (PRE) complex, thus giving elongation factor G a second chance to translocate the tRNAs correctly. Binds to ribosomes in a GTP-dependent manner.</text>
</comment>
<comment type="catalytic activity">
    <reaction evidence="1">
        <text>GTP + H2O = GDP + phosphate + H(+)</text>
        <dbReference type="Rhea" id="RHEA:19669"/>
        <dbReference type="ChEBI" id="CHEBI:15377"/>
        <dbReference type="ChEBI" id="CHEBI:15378"/>
        <dbReference type="ChEBI" id="CHEBI:37565"/>
        <dbReference type="ChEBI" id="CHEBI:43474"/>
        <dbReference type="ChEBI" id="CHEBI:58189"/>
        <dbReference type="EC" id="3.6.5.n1"/>
    </reaction>
</comment>
<comment type="subcellular location">
    <subcellularLocation>
        <location evidence="1">Cell membrane</location>
        <topology evidence="1">Peripheral membrane protein</topology>
        <orientation evidence="1">Cytoplasmic side</orientation>
    </subcellularLocation>
</comment>
<comment type="similarity">
    <text evidence="1">Belongs to the TRAFAC class translation factor GTPase superfamily. Classic translation factor GTPase family. LepA subfamily.</text>
</comment>